<sequence>MAAAKIKRNDEVIVLSGKDKGKKGKVKCVFYNKGRVIVTGINLVKKHQKPIPNKNQPGGIIEKEASVDLSNIAIFNPTLNKADRIGFTIQNGKKIRIFKSNGDIVK</sequence>
<feature type="chain" id="PRO_0000241571" description="Large ribosomal subunit protein uL24">
    <location>
        <begin position="1"/>
        <end position="106"/>
    </location>
</feature>
<proteinExistence type="inferred from homology"/>
<keyword id="KW-1185">Reference proteome</keyword>
<keyword id="KW-0687">Ribonucleoprotein</keyword>
<keyword id="KW-0689">Ribosomal protein</keyword>
<keyword id="KW-0694">RNA-binding</keyword>
<keyword id="KW-0699">rRNA-binding</keyword>
<protein>
    <recommendedName>
        <fullName evidence="1">Large ribosomal subunit protein uL24</fullName>
    </recommendedName>
    <alternativeName>
        <fullName evidence="2">50S ribosomal protein L24</fullName>
    </alternativeName>
</protein>
<gene>
    <name evidence="1" type="primary">rplX</name>
    <name type="ordered locus">BPEN_209</name>
</gene>
<comment type="function">
    <text evidence="1">One of two assembly initiator proteins, it binds directly to the 5'-end of the 23S rRNA, where it nucleates assembly of the 50S subunit.</text>
</comment>
<comment type="function">
    <text evidence="1">One of the proteins that surrounds the polypeptide exit tunnel on the outside of the subunit.</text>
</comment>
<comment type="subunit">
    <text evidence="1">Part of the 50S ribosomal subunit.</text>
</comment>
<comment type="similarity">
    <text evidence="1">Belongs to the universal ribosomal protein uL24 family.</text>
</comment>
<accession>Q493J7</accession>
<organism>
    <name type="scientific">Blochmanniella pennsylvanica (strain BPEN)</name>
    <dbReference type="NCBI Taxonomy" id="291272"/>
    <lineage>
        <taxon>Bacteria</taxon>
        <taxon>Pseudomonadati</taxon>
        <taxon>Pseudomonadota</taxon>
        <taxon>Gammaproteobacteria</taxon>
        <taxon>Enterobacterales</taxon>
        <taxon>Enterobacteriaceae</taxon>
        <taxon>ant endosymbionts</taxon>
        <taxon>Candidatus Blochmanniella</taxon>
    </lineage>
</organism>
<reference key="1">
    <citation type="journal article" date="2005" name="Genome Res.">
        <title>Genome sequence of Blochmannia pennsylvanicus indicates parallel evolutionary trends among bacterial mutualists of insects.</title>
        <authorList>
            <person name="Degnan P.H."/>
            <person name="Lazarus A.B."/>
            <person name="Wernegreen J.J."/>
        </authorList>
    </citation>
    <scope>NUCLEOTIDE SEQUENCE [LARGE SCALE GENOMIC DNA]</scope>
    <source>
        <strain>BPEN</strain>
    </source>
</reference>
<dbReference type="EMBL" id="CP000016">
    <property type="protein sequence ID" value="AAZ40843.1"/>
    <property type="molecule type" value="Genomic_DNA"/>
</dbReference>
<dbReference type="RefSeq" id="WP_011282750.1">
    <property type="nucleotide sequence ID" value="NC_007292.1"/>
</dbReference>
<dbReference type="SMR" id="Q493J7"/>
<dbReference type="STRING" id="291272.BPEN_209"/>
<dbReference type="KEGG" id="bpn:BPEN_209"/>
<dbReference type="eggNOG" id="COG0198">
    <property type="taxonomic scope" value="Bacteria"/>
</dbReference>
<dbReference type="HOGENOM" id="CLU_093315_2_2_6"/>
<dbReference type="OrthoDB" id="9807419at2"/>
<dbReference type="Proteomes" id="UP000007794">
    <property type="component" value="Chromosome"/>
</dbReference>
<dbReference type="GO" id="GO:0005829">
    <property type="term" value="C:cytosol"/>
    <property type="evidence" value="ECO:0007669"/>
    <property type="project" value="UniProtKB-ARBA"/>
</dbReference>
<dbReference type="GO" id="GO:1990904">
    <property type="term" value="C:ribonucleoprotein complex"/>
    <property type="evidence" value="ECO:0007669"/>
    <property type="project" value="UniProtKB-KW"/>
</dbReference>
<dbReference type="GO" id="GO:0005840">
    <property type="term" value="C:ribosome"/>
    <property type="evidence" value="ECO:0007669"/>
    <property type="project" value="UniProtKB-KW"/>
</dbReference>
<dbReference type="GO" id="GO:0019843">
    <property type="term" value="F:rRNA binding"/>
    <property type="evidence" value="ECO:0007669"/>
    <property type="project" value="UniProtKB-UniRule"/>
</dbReference>
<dbReference type="GO" id="GO:0003735">
    <property type="term" value="F:structural constituent of ribosome"/>
    <property type="evidence" value="ECO:0007669"/>
    <property type="project" value="InterPro"/>
</dbReference>
<dbReference type="GO" id="GO:0006412">
    <property type="term" value="P:translation"/>
    <property type="evidence" value="ECO:0007669"/>
    <property type="project" value="UniProtKB-UniRule"/>
</dbReference>
<dbReference type="CDD" id="cd06089">
    <property type="entry name" value="KOW_RPL26"/>
    <property type="match status" value="1"/>
</dbReference>
<dbReference type="FunFam" id="2.30.30.30:FF:000004">
    <property type="entry name" value="50S ribosomal protein L24"/>
    <property type="match status" value="1"/>
</dbReference>
<dbReference type="Gene3D" id="2.30.30.30">
    <property type="match status" value="1"/>
</dbReference>
<dbReference type="HAMAP" id="MF_01326_B">
    <property type="entry name" value="Ribosomal_uL24_B"/>
    <property type="match status" value="1"/>
</dbReference>
<dbReference type="InterPro" id="IPR005824">
    <property type="entry name" value="KOW"/>
</dbReference>
<dbReference type="InterPro" id="IPR014722">
    <property type="entry name" value="Rib_uL2_dom2"/>
</dbReference>
<dbReference type="InterPro" id="IPR003256">
    <property type="entry name" value="Ribosomal_uL24"/>
</dbReference>
<dbReference type="InterPro" id="IPR005825">
    <property type="entry name" value="Ribosomal_uL24_CS"/>
</dbReference>
<dbReference type="InterPro" id="IPR041988">
    <property type="entry name" value="Ribosomal_uL24_KOW"/>
</dbReference>
<dbReference type="InterPro" id="IPR008991">
    <property type="entry name" value="Translation_prot_SH3-like_sf"/>
</dbReference>
<dbReference type="NCBIfam" id="TIGR01079">
    <property type="entry name" value="rplX_bact"/>
    <property type="match status" value="1"/>
</dbReference>
<dbReference type="PANTHER" id="PTHR12903">
    <property type="entry name" value="MITOCHONDRIAL RIBOSOMAL PROTEIN L24"/>
    <property type="match status" value="1"/>
</dbReference>
<dbReference type="Pfam" id="PF00467">
    <property type="entry name" value="KOW"/>
    <property type="match status" value="1"/>
</dbReference>
<dbReference type="Pfam" id="PF17136">
    <property type="entry name" value="ribosomal_L24"/>
    <property type="match status" value="1"/>
</dbReference>
<dbReference type="SMART" id="SM00739">
    <property type="entry name" value="KOW"/>
    <property type="match status" value="1"/>
</dbReference>
<dbReference type="SUPFAM" id="SSF50104">
    <property type="entry name" value="Translation proteins SH3-like domain"/>
    <property type="match status" value="1"/>
</dbReference>
<dbReference type="PROSITE" id="PS01108">
    <property type="entry name" value="RIBOSOMAL_L24"/>
    <property type="match status" value="1"/>
</dbReference>
<evidence type="ECO:0000255" key="1">
    <source>
        <dbReference type="HAMAP-Rule" id="MF_01326"/>
    </source>
</evidence>
<evidence type="ECO:0000305" key="2"/>
<name>RL24_BLOPB</name>